<gene>
    <name type="primary">FGA</name>
</gene>
<reference key="1">
    <citation type="journal article" date="1965" name="Acta Chem. Scand.">
        <title>Studies on fibrinopeptides from mammals.</title>
        <authorList>
            <person name="Blombaeck B."/>
            <person name="Blombaeck M."/>
            <person name="Grondahl N.J."/>
        </authorList>
    </citation>
    <scope>PROTEIN SEQUENCE</scope>
</reference>
<keyword id="KW-1064">Adaptive immunity</keyword>
<keyword id="KW-0094">Blood coagulation</keyword>
<keyword id="KW-0175">Coiled coil</keyword>
<keyword id="KW-0903">Direct protein sequencing</keyword>
<keyword id="KW-1015">Disulfide bond</keyword>
<keyword id="KW-0356">Hemostasis</keyword>
<keyword id="KW-0391">Immunity</keyword>
<keyword id="KW-0399">Innate immunity</keyword>
<keyword id="KW-0964">Secreted</keyword>
<dbReference type="GO" id="GO:0005576">
    <property type="term" value="C:extracellular region"/>
    <property type="evidence" value="ECO:0007669"/>
    <property type="project" value="UniProtKB-SubCell"/>
</dbReference>
<dbReference type="GO" id="GO:0002250">
    <property type="term" value="P:adaptive immune response"/>
    <property type="evidence" value="ECO:0007669"/>
    <property type="project" value="UniProtKB-KW"/>
</dbReference>
<dbReference type="GO" id="GO:0007596">
    <property type="term" value="P:blood coagulation"/>
    <property type="evidence" value="ECO:0007669"/>
    <property type="project" value="UniProtKB-KW"/>
</dbReference>
<dbReference type="GO" id="GO:0045087">
    <property type="term" value="P:innate immune response"/>
    <property type="evidence" value="ECO:0007669"/>
    <property type="project" value="UniProtKB-KW"/>
</dbReference>
<sequence>ADGSDPASSDFLAEGGGVR</sequence>
<accession>P68216</accession>
<accession>P14446</accession>
<protein>
    <recommendedName>
        <fullName>Fibrinogen alpha chain</fullName>
    </recommendedName>
    <component>
        <recommendedName>
            <fullName>Fibrinopeptide A</fullName>
        </recommendedName>
    </component>
</protein>
<feature type="peptide" id="PRO_0000009013" description="Fibrinopeptide A">
    <location>
        <begin position="1"/>
        <end position="19"/>
    </location>
</feature>
<feature type="non-terminal residue">
    <location>
        <position position="19"/>
    </location>
</feature>
<evidence type="ECO:0000250" key="1">
    <source>
        <dbReference type="UniProtKB" id="E9PV24"/>
    </source>
</evidence>
<evidence type="ECO:0000250" key="2">
    <source>
        <dbReference type="UniProtKB" id="P02671"/>
    </source>
</evidence>
<proteinExistence type="evidence at protein level"/>
<organism>
    <name type="scientific">Cervus elaphus</name>
    <name type="common">Red deer</name>
    <dbReference type="NCBI Taxonomy" id="9860"/>
    <lineage>
        <taxon>Eukaryota</taxon>
        <taxon>Metazoa</taxon>
        <taxon>Chordata</taxon>
        <taxon>Craniata</taxon>
        <taxon>Vertebrata</taxon>
        <taxon>Euteleostomi</taxon>
        <taxon>Mammalia</taxon>
        <taxon>Eutheria</taxon>
        <taxon>Laurasiatheria</taxon>
        <taxon>Artiodactyla</taxon>
        <taxon>Ruminantia</taxon>
        <taxon>Pecora</taxon>
        <taxon>Cervidae</taxon>
        <taxon>Cervinae</taxon>
        <taxon>Cervus</taxon>
    </lineage>
</organism>
<comment type="function">
    <text evidence="1">Cleaved by the protease thrombin to yield monomers which, together with fibrinogen beta (FGB) and fibrinogen gamma (FGG), polymerize to form an insoluble fibrin matrix. Fibrin has a major function in hemostasis as one of the primary components of blood clots. In addition, functions during the early stages of wound repair to stabilize the lesion and guide cell migration during re-epithelialization. Was originally thought to be essential for platelet aggregation, based on in vitro studies using anticoagulated blood. However, subsequent studies have shown that it is not absolutely required for thrombus formation in vivo. Enhances expression of SELP in activated platelets via an ITGB3-dependent pathway. Maternal fibrinogen is essential for successful pregnancy. Fibrin deposition is also associated with infection, where it protects against IFNG-mediated hemorrhage. May also facilitate the immune response via both innate and T-cell mediated pathways.</text>
</comment>
<comment type="subunit">
    <text evidence="2">Heterohexamer; disulfide linked. Contains 2 sets of 3 non-identical chains (alpha, beta and gamma). The 2 heterotrimers are in head to head conformation with the N-termini in a small central domain (By similarity).</text>
</comment>
<comment type="subcellular location">
    <subcellularLocation>
        <location>Secreted</location>
    </subcellularLocation>
</comment>
<comment type="domain">
    <text evidence="2">A long coiled coil structure formed by 3 polypeptide chains connects the central nodule to the C-terminal domains (distal nodules). The long C-terminal ends of the alpha chains fold back, contributing a fourth strand to the coiled coil structure.</text>
</comment>
<comment type="PTM">
    <text>Conversion of fibrinogen to fibrin is triggered by thrombin, which cleaves fibrinopeptides A and B from alpha and beta chains, and thus exposes the N-terminal polymerization sites responsible for the formation of the soft clot. The soft clot is converted into the hard clot by factor XIIIA which catalyzes the epsilon-(gamma-glutamyl)lysine cross-linking between gamma chains (stronger) and between alpha chains (weaker) of different monomers.</text>
</comment>
<comment type="PTM">
    <text>Forms F13A-mediated cross-links between a glutamine and the epsilon-amino group of a lysine residue, forming fibronectin-fibrinogen heteropolymers.</text>
</comment>
<name>FIBA_CEREL</name>